<gene>
    <name evidence="1" type="primary">cmoA</name>
    <name type="ordered locus">SSON_1250</name>
</gene>
<comment type="function">
    <text evidence="1">Catalyzes the conversion of S-adenosyl-L-methionine (SAM) to carboxy-S-adenosyl-L-methionine (Cx-SAM).</text>
</comment>
<comment type="catalytic activity">
    <reaction evidence="1">
        <text>prephenate + S-adenosyl-L-methionine = carboxy-S-adenosyl-L-methionine + 3-phenylpyruvate + H2O</text>
        <dbReference type="Rhea" id="RHEA:51692"/>
        <dbReference type="ChEBI" id="CHEBI:15377"/>
        <dbReference type="ChEBI" id="CHEBI:18005"/>
        <dbReference type="ChEBI" id="CHEBI:29934"/>
        <dbReference type="ChEBI" id="CHEBI:59789"/>
        <dbReference type="ChEBI" id="CHEBI:134278"/>
    </reaction>
</comment>
<comment type="subunit">
    <text evidence="1">Homodimer.</text>
</comment>
<comment type="similarity">
    <text evidence="1">Belongs to the class I-like SAM-binding methyltransferase superfamily. Cx-SAM synthase family.</text>
</comment>
<keyword id="KW-1185">Reference proteome</keyword>
<keyword id="KW-0949">S-adenosyl-L-methionine</keyword>
<keyword id="KW-0808">Transferase</keyword>
<accession>Q3Z2P6</accession>
<protein>
    <recommendedName>
        <fullName evidence="1">Carboxy-S-adenosyl-L-methionine synthase</fullName>
        <shortName evidence="1">Cx-SAM synthase</shortName>
        <ecNumber evidence="1">2.1.3.-</ecNumber>
    </recommendedName>
</protein>
<organism>
    <name type="scientific">Shigella sonnei (strain Ss046)</name>
    <dbReference type="NCBI Taxonomy" id="300269"/>
    <lineage>
        <taxon>Bacteria</taxon>
        <taxon>Pseudomonadati</taxon>
        <taxon>Pseudomonadota</taxon>
        <taxon>Gammaproteobacteria</taxon>
        <taxon>Enterobacterales</taxon>
        <taxon>Enterobacteriaceae</taxon>
        <taxon>Shigella</taxon>
    </lineage>
</organism>
<feature type="chain" id="PRO_0000314391" description="Carboxy-S-adenosyl-L-methionine synthase">
    <location>
        <begin position="1"/>
        <end position="247"/>
    </location>
</feature>
<feature type="binding site" evidence="1">
    <location>
        <position position="39"/>
    </location>
    <ligand>
        <name>S-adenosyl-L-methionine</name>
        <dbReference type="ChEBI" id="CHEBI:59789"/>
    </ligand>
</feature>
<feature type="binding site" evidence="1">
    <location>
        <begin position="64"/>
        <end position="66"/>
    </location>
    <ligand>
        <name>S-adenosyl-L-methionine</name>
        <dbReference type="ChEBI" id="CHEBI:59789"/>
    </ligand>
</feature>
<feature type="binding site" evidence="1">
    <location>
        <begin position="89"/>
        <end position="90"/>
    </location>
    <ligand>
        <name>S-adenosyl-L-methionine</name>
        <dbReference type="ChEBI" id="CHEBI:59789"/>
    </ligand>
</feature>
<feature type="binding site" evidence="1">
    <location>
        <begin position="117"/>
        <end position="118"/>
    </location>
    <ligand>
        <name>S-adenosyl-L-methionine</name>
        <dbReference type="ChEBI" id="CHEBI:59789"/>
    </ligand>
</feature>
<feature type="binding site" evidence="1">
    <location>
        <position position="132"/>
    </location>
    <ligand>
        <name>S-adenosyl-L-methionine</name>
        <dbReference type="ChEBI" id="CHEBI:59789"/>
    </ligand>
</feature>
<feature type="binding site" evidence="1">
    <location>
        <position position="199"/>
    </location>
    <ligand>
        <name>S-adenosyl-L-methionine</name>
        <dbReference type="ChEBI" id="CHEBI:59789"/>
    </ligand>
</feature>
<reference key="1">
    <citation type="journal article" date="2005" name="Nucleic Acids Res.">
        <title>Genome dynamics and diversity of Shigella species, the etiologic agents of bacillary dysentery.</title>
        <authorList>
            <person name="Yang F."/>
            <person name="Yang J."/>
            <person name="Zhang X."/>
            <person name="Chen L."/>
            <person name="Jiang Y."/>
            <person name="Yan Y."/>
            <person name="Tang X."/>
            <person name="Wang J."/>
            <person name="Xiong Z."/>
            <person name="Dong J."/>
            <person name="Xue Y."/>
            <person name="Zhu Y."/>
            <person name="Xu X."/>
            <person name="Sun L."/>
            <person name="Chen S."/>
            <person name="Nie H."/>
            <person name="Peng J."/>
            <person name="Xu J."/>
            <person name="Wang Y."/>
            <person name="Yuan Z."/>
            <person name="Wen Y."/>
            <person name="Yao Z."/>
            <person name="Shen Y."/>
            <person name="Qiang B."/>
            <person name="Hou Y."/>
            <person name="Yu J."/>
            <person name="Jin Q."/>
        </authorList>
    </citation>
    <scope>NUCLEOTIDE SEQUENCE [LARGE SCALE GENOMIC DNA]</scope>
    <source>
        <strain>Ss046</strain>
    </source>
</reference>
<sequence>MSHRDTLFSAPIARLGDWTFDERVAEVFPDMIQRSVPGYSNIISMIGMLAERFVQPGTQVYDLGCSLGAATLSVRRNIHHDNCKIIAIDNSPAMIERCSRHIDAYKAPTPVDVIEGDIRDIAIENASMVVLNFTLQFLEPSERQALLDKIYQGLNPGGALVLSEKFSFEDAKVGELLFNMHHDFKRANGYSELEISQKRSMLENVMLTDSVETHKARLHKAGFEHSELWFQCFNFGSLVALKAEDAA</sequence>
<dbReference type="EC" id="2.1.3.-" evidence="1"/>
<dbReference type="EMBL" id="CP000038">
    <property type="protein sequence ID" value="AAZ87966.1"/>
    <property type="molecule type" value="Genomic_DNA"/>
</dbReference>
<dbReference type="RefSeq" id="WP_000019601.1">
    <property type="nucleotide sequence ID" value="NC_007384.1"/>
</dbReference>
<dbReference type="SMR" id="Q3Z2P6"/>
<dbReference type="GeneID" id="93776171"/>
<dbReference type="KEGG" id="ssn:SSON_1250"/>
<dbReference type="HOGENOM" id="CLU_078475_0_0_6"/>
<dbReference type="Proteomes" id="UP000002529">
    <property type="component" value="Chromosome"/>
</dbReference>
<dbReference type="GO" id="GO:0016743">
    <property type="term" value="F:carboxyl- or carbamoyltransferase activity"/>
    <property type="evidence" value="ECO:0007669"/>
    <property type="project" value="UniProtKB-UniRule"/>
</dbReference>
<dbReference type="GO" id="GO:1904047">
    <property type="term" value="F:S-adenosyl-L-methionine binding"/>
    <property type="evidence" value="ECO:0007669"/>
    <property type="project" value="UniProtKB-UniRule"/>
</dbReference>
<dbReference type="GO" id="GO:0002098">
    <property type="term" value="P:tRNA wobble uridine modification"/>
    <property type="evidence" value="ECO:0007669"/>
    <property type="project" value="InterPro"/>
</dbReference>
<dbReference type="CDD" id="cd02440">
    <property type="entry name" value="AdoMet_MTases"/>
    <property type="match status" value="1"/>
</dbReference>
<dbReference type="FunFam" id="3.40.50.150:FF:000030">
    <property type="entry name" value="Carboxy-S-adenosyl-L-methionine synthase"/>
    <property type="match status" value="1"/>
</dbReference>
<dbReference type="Gene3D" id="3.40.50.150">
    <property type="entry name" value="Vaccinia Virus protein VP39"/>
    <property type="match status" value="1"/>
</dbReference>
<dbReference type="HAMAP" id="MF_01589">
    <property type="entry name" value="Cx_SAM_synthase"/>
    <property type="match status" value="1"/>
</dbReference>
<dbReference type="InterPro" id="IPR005271">
    <property type="entry name" value="CmoA"/>
</dbReference>
<dbReference type="InterPro" id="IPR041698">
    <property type="entry name" value="Methyltransf_25"/>
</dbReference>
<dbReference type="InterPro" id="IPR029063">
    <property type="entry name" value="SAM-dependent_MTases_sf"/>
</dbReference>
<dbReference type="NCBIfam" id="TIGR00740">
    <property type="entry name" value="carboxy-S-adenosyl-L-methionine synthase CmoA"/>
    <property type="match status" value="1"/>
</dbReference>
<dbReference type="NCBIfam" id="NF011995">
    <property type="entry name" value="PRK15451.1"/>
    <property type="match status" value="1"/>
</dbReference>
<dbReference type="PANTHER" id="PTHR43861:SF2">
    <property type="entry name" value="CARBOXY-S-ADENOSYL-L-METHIONINE SYNTHASE"/>
    <property type="match status" value="1"/>
</dbReference>
<dbReference type="PANTHER" id="PTHR43861">
    <property type="entry name" value="TRANS-ACONITATE 2-METHYLTRANSFERASE-RELATED"/>
    <property type="match status" value="1"/>
</dbReference>
<dbReference type="Pfam" id="PF13649">
    <property type="entry name" value="Methyltransf_25"/>
    <property type="match status" value="1"/>
</dbReference>
<dbReference type="PIRSF" id="PIRSF006325">
    <property type="entry name" value="MeTrfase_bac"/>
    <property type="match status" value="1"/>
</dbReference>
<dbReference type="SUPFAM" id="SSF53335">
    <property type="entry name" value="S-adenosyl-L-methionine-dependent methyltransferases"/>
    <property type="match status" value="1"/>
</dbReference>
<name>CMOA_SHISS</name>
<proteinExistence type="inferred from homology"/>
<evidence type="ECO:0000255" key="1">
    <source>
        <dbReference type="HAMAP-Rule" id="MF_01589"/>
    </source>
</evidence>